<feature type="chain" id="PRO_0000115325" description="Protein UL42">
    <location>
        <begin position="1"/>
        <end position="125"/>
    </location>
</feature>
<feature type="transmembrane region" description="Helical" evidence="3">
    <location>
        <begin position="89"/>
        <end position="109"/>
    </location>
</feature>
<feature type="region of interest" description="Disordered" evidence="4">
    <location>
        <begin position="1"/>
        <end position="47"/>
    </location>
</feature>
<feature type="short sequence motif" description="PPXY motif" evidence="1">
    <location>
        <begin position="16"/>
        <end position="19"/>
    </location>
</feature>
<feature type="short sequence motif" description="PPXY motif" evidence="1">
    <location>
        <begin position="42"/>
        <end position="45"/>
    </location>
</feature>
<feature type="compositionally biased region" description="Pro residues" evidence="4">
    <location>
        <begin position="32"/>
        <end position="47"/>
    </location>
</feature>
<comment type="function">
    <text evidence="1 5">Plays a role in the inhibition of host innate immune response to promote latent infection (PubMed:31107917). Mechanistically, suppresses viral DNA-triggered signaling by impairing DNA binding and oligomerization of CGAS. Also impairs the translocation of host STING1 from the endoplasmic reticulum to perinuclear punctate structures which is an essential step for its activation (PubMed:31107917). Regulates the function of host NEDD4 family ubiquitin E3 ligases through its PPxY motif and thereby prevents the excessive ubiquitination of gB and its degradation by inhibiting these E3 ligases (By similarity).</text>
</comment>
<comment type="subunit">
    <text evidence="2 5">Interacts with host ITCH; this interaction induces the ubiquitination and subsequent degradation of ITCH. Interacts with host STING1 (PubMed:31107917). Interacts with CGAS (PubMed:31107917).</text>
</comment>
<comment type="subcellular location">
    <subcellularLocation>
        <location evidence="2">Host membrane</location>
        <topology evidence="2">Single-pass membrane protein</topology>
    </subcellularLocation>
    <subcellularLocation>
        <location evidence="5">Host cytoplasm</location>
    </subcellularLocation>
    <text evidence="2">Accumulates in the perinuclear region of the host cytoplasm, with some dispersal into the cytoplasm in a fine-speckled pattern.</text>
</comment>
<comment type="domain">
    <text evidence="1">Late-budding domains (L domains) are short sequence motifs essential for viral particle budding. They recruit proteins of the host ESCRT machinery (Endosomal Sorting Complex Required for Transport) or ESCRT-associated proteins. Contains two L domains: PPXY motifs which are involved in the interaction with ITCH, a member of the NEDD4 family.</text>
</comment>
<comment type="similarity">
    <text evidence="6">Belongs to the Cytomegalovirus UL42 protein family.</text>
</comment>
<comment type="sequence caution" evidence="6">
    <conflict type="miscellaneous discrepancy">
        <sequence resource="EMBL-CDS" id="CAA35401"/>
    </conflict>
    <text>Internal deletion.</text>
</comment>
<gene>
    <name type="primary">UL42</name>
</gene>
<proteinExistence type="evidence at protein level"/>
<keyword id="KW-1035">Host cytoplasm</keyword>
<keyword id="KW-1043">Host membrane</keyword>
<keyword id="KW-0945">Host-virus interaction</keyword>
<keyword id="KW-1090">Inhibition of host innate immune response by virus</keyword>
<keyword id="KW-0472">Membrane</keyword>
<keyword id="KW-1185">Reference proteome</keyword>
<keyword id="KW-0812">Transmembrane</keyword>
<keyword id="KW-1133">Transmembrane helix</keyword>
<keyword id="KW-0899">Viral immunoevasion</keyword>
<reference key="1">
    <citation type="journal article" date="1990" name="Curr. Top. Microbiol. Immunol.">
        <title>Analysis of the protein-coding content of the sequence of human cytomegalovirus strain AD169.</title>
        <authorList>
            <person name="Chee M.S."/>
            <person name="Bankier A.T."/>
            <person name="Beck S."/>
            <person name="Bohni R."/>
            <person name="Brown C.M."/>
            <person name="Cerny R."/>
            <person name="Horsnell T."/>
            <person name="Hutchison C.A. III"/>
            <person name="Kouzarides T."/>
            <person name="Martignetti J.A."/>
            <person name="Preddie E."/>
            <person name="Satchwell S.C."/>
            <person name="Tomlinson P."/>
            <person name="Weston K.M."/>
            <person name="Barrell B.G."/>
        </authorList>
    </citation>
    <scope>NUCLEOTIDE SEQUENCE [LARGE SCALE GENOMIC DNA]</scope>
</reference>
<reference key="2">
    <citation type="journal article" date="1997" name="J. Virol.">
        <title>The published DNA sequence of human cytomegalovirus strain AD169 lacks 929 base pairs of DNA affecting genes UL42 and UL43.</title>
        <authorList>
            <person name="Dargan D.J."/>
            <person name="Jamieson F.E."/>
            <person name="Maclean J."/>
            <person name="Dolan A."/>
            <person name="Addison C."/>
            <person name="McGeoch D.J."/>
        </authorList>
    </citation>
    <scope>NUCLEOTIDE SEQUENCE [GENOMIC DNA]</scope>
    <scope>SEQUENCE REVISION</scope>
</reference>
<reference key="3">
    <citation type="journal article" date="2003" name="J. Gen. Virol.">
        <title>The human cytomegalovirus genome revisited: comparison with the chimpanzee cytomegalovirus genome.</title>
        <authorList>
            <person name="Davison A.J."/>
            <person name="Dolan A."/>
            <person name="Akter P."/>
            <person name="Addison C."/>
            <person name="Dargan D.J."/>
            <person name="Alcendor D.J."/>
            <person name="McGeoch D.J."/>
            <person name="Hayward G.S."/>
        </authorList>
    </citation>
    <scope>GENOME REANNOTATION</scope>
</reference>
<reference key="4">
    <citation type="journal article" date="2004" name="J. Virol.">
        <authorList>
            <person name="Davison A.J."/>
            <person name="Dolan A."/>
            <person name="Akter P."/>
            <person name="Addison C."/>
            <person name="Dargan D.J."/>
            <person name="Alcendor D.J."/>
            <person name="McGeoch D.J."/>
            <person name="Hayward G.S."/>
        </authorList>
    </citation>
    <scope>ERRATUM OF PUBMED:12533697</scope>
</reference>
<reference key="5">
    <citation type="journal article" date="2019" name="PLoS Pathog.">
        <title>Human cytomegalovirus protein UL42 antagonizes cGAS/MITA-mediated innate antiviral response.</title>
        <authorList>
            <person name="Fu Y.Z."/>
            <person name="Guo Y."/>
            <person name="Zou H.M."/>
            <person name="Su S."/>
            <person name="Wang S.Y."/>
            <person name="Yang Q."/>
            <person name="Luo M.H."/>
            <person name="Wang Y.Y."/>
        </authorList>
    </citation>
    <scope>FUNCTION</scope>
    <scope>INTERACTION WITH HOST STING1 AND CGAS</scope>
    <scope>SUBCELLULAR LOCATION</scope>
</reference>
<organismHost>
    <name type="scientific">Homo sapiens</name>
    <name type="common">Human</name>
    <dbReference type="NCBI Taxonomy" id="9606"/>
</organismHost>
<organism>
    <name type="scientific">Human cytomegalovirus (strain AD169)</name>
    <name type="common">HHV-5</name>
    <name type="synonym">Human herpesvirus 5</name>
    <dbReference type="NCBI Taxonomy" id="10360"/>
    <lineage>
        <taxon>Viruses</taxon>
        <taxon>Duplodnaviria</taxon>
        <taxon>Heunggongvirae</taxon>
        <taxon>Peploviricota</taxon>
        <taxon>Herviviricetes</taxon>
        <taxon>Herpesvirales</taxon>
        <taxon>Orthoherpesviridae</taxon>
        <taxon>Betaherpesvirinae</taxon>
        <taxon>Cytomegalovirus</taxon>
        <taxon>Cytomegalovirus humanbeta5</taxon>
        <taxon>Human cytomegalovirus</taxon>
    </lineage>
</organism>
<name>UL42_HCMVA</name>
<accession>P16815</accession>
<accession>Q7M6F8</accession>
<evidence type="ECO:0000250" key="1">
    <source>
        <dbReference type="UniProtKB" id="D5LX53"/>
    </source>
</evidence>
<evidence type="ECO:0000250" key="2">
    <source>
        <dbReference type="UniProtKB" id="F5HHZ3"/>
    </source>
</evidence>
<evidence type="ECO:0000255" key="3"/>
<evidence type="ECO:0000256" key="4">
    <source>
        <dbReference type="SAM" id="MobiDB-lite"/>
    </source>
</evidence>
<evidence type="ECO:0000269" key="5">
    <source>
    </source>
</evidence>
<evidence type="ECO:0000305" key="6"/>
<dbReference type="EMBL" id="X17403">
    <property type="protein sequence ID" value="CAA35401.1"/>
    <property type="status" value="ALT_SEQ"/>
    <property type="molecule type" value="Genomic_DNA"/>
</dbReference>
<dbReference type="EMBL" id="Y13735">
    <property type="protein sequence ID" value="CAA74074.1"/>
    <property type="molecule type" value="Genomic_DNA"/>
</dbReference>
<dbReference type="EMBL" id="BK000394">
    <property type="protein sequence ID" value="DAA00234.1"/>
    <property type="molecule type" value="Genomic_DNA"/>
</dbReference>
<dbReference type="PIR" id="S09805">
    <property type="entry name" value="S09805"/>
</dbReference>
<dbReference type="RefSeq" id="YP_081500.1">
    <property type="nucleotide sequence ID" value="NC_006273.2"/>
</dbReference>
<dbReference type="SMR" id="P16815"/>
<dbReference type="BioGRID" id="1677993">
    <property type="interactions" value="1"/>
</dbReference>
<dbReference type="DNASU" id="3077440"/>
<dbReference type="GeneID" id="3077440"/>
<dbReference type="KEGG" id="vg:3077440"/>
<dbReference type="Proteomes" id="UP000008991">
    <property type="component" value="Segment"/>
</dbReference>
<dbReference type="Proteomes" id="UP000008992">
    <property type="component" value="Segment"/>
</dbReference>
<dbReference type="GO" id="GO:0030430">
    <property type="term" value="C:host cell cytoplasm"/>
    <property type="evidence" value="ECO:0007669"/>
    <property type="project" value="UniProtKB-SubCell"/>
</dbReference>
<dbReference type="GO" id="GO:0033644">
    <property type="term" value="C:host cell membrane"/>
    <property type="evidence" value="ECO:0007669"/>
    <property type="project" value="UniProtKB-SubCell"/>
</dbReference>
<dbReference type="GO" id="GO:0016020">
    <property type="term" value="C:membrane"/>
    <property type="evidence" value="ECO:0007669"/>
    <property type="project" value="UniProtKB-KW"/>
</dbReference>
<dbReference type="GO" id="GO:0052170">
    <property type="term" value="P:symbiont-mediated suppression of host innate immune response"/>
    <property type="evidence" value="ECO:0007669"/>
    <property type="project" value="UniProtKB-KW"/>
</dbReference>
<dbReference type="InterPro" id="IPR035110">
    <property type="entry name" value="UL42"/>
</dbReference>
<dbReference type="Pfam" id="PF17638">
    <property type="entry name" value="UL42"/>
    <property type="match status" value="1"/>
</dbReference>
<protein>
    <recommendedName>
        <fullName>Protein UL42</fullName>
    </recommendedName>
</protein>
<sequence>MEPTPMLRDRDHDDAPPTYEQAMGLCPTTVSTPPPPPPDCSPPPYRPPYCLVSSPSPRHTFDMDMMEMPATMHPTTGAYFDNGWKWTFALLVVAILGIIFLAVVFTVVINRDSANITTGTQASSG</sequence>